<feature type="chain" id="PRO_1000093038" description="S-adenosylmethionine synthase">
    <location>
        <begin position="1"/>
        <end position="391"/>
    </location>
</feature>
<feature type="region of interest" description="Flexible loop" evidence="1">
    <location>
        <begin position="98"/>
        <end position="108"/>
    </location>
</feature>
<feature type="binding site" description="in other chain" evidence="1">
    <location>
        <position position="14"/>
    </location>
    <ligand>
        <name>ATP</name>
        <dbReference type="ChEBI" id="CHEBI:30616"/>
        <note>ligand shared between two neighboring subunits</note>
    </ligand>
</feature>
<feature type="binding site" evidence="1">
    <location>
        <position position="16"/>
    </location>
    <ligand>
        <name>Mg(2+)</name>
        <dbReference type="ChEBI" id="CHEBI:18420"/>
    </ligand>
</feature>
<feature type="binding site" evidence="1">
    <location>
        <position position="42"/>
    </location>
    <ligand>
        <name>K(+)</name>
        <dbReference type="ChEBI" id="CHEBI:29103"/>
    </ligand>
</feature>
<feature type="binding site" description="in other chain" evidence="1">
    <location>
        <position position="55"/>
    </location>
    <ligand>
        <name>L-methionine</name>
        <dbReference type="ChEBI" id="CHEBI:57844"/>
        <note>ligand shared between two neighboring subunits</note>
    </ligand>
</feature>
<feature type="binding site" description="in other chain" evidence="1">
    <location>
        <position position="98"/>
    </location>
    <ligand>
        <name>L-methionine</name>
        <dbReference type="ChEBI" id="CHEBI:57844"/>
        <note>ligand shared between two neighboring subunits</note>
    </ligand>
</feature>
<feature type="binding site" description="in other chain" evidence="1">
    <location>
        <begin position="172"/>
        <end position="174"/>
    </location>
    <ligand>
        <name>ATP</name>
        <dbReference type="ChEBI" id="CHEBI:30616"/>
        <note>ligand shared between two neighboring subunits</note>
    </ligand>
</feature>
<feature type="binding site" description="in other chain" evidence="1">
    <location>
        <begin position="238"/>
        <end position="239"/>
    </location>
    <ligand>
        <name>ATP</name>
        <dbReference type="ChEBI" id="CHEBI:30616"/>
        <note>ligand shared between two neighboring subunits</note>
    </ligand>
</feature>
<feature type="binding site" evidence="1">
    <location>
        <position position="247"/>
    </location>
    <ligand>
        <name>ATP</name>
        <dbReference type="ChEBI" id="CHEBI:30616"/>
        <note>ligand shared between two neighboring subunits</note>
    </ligand>
</feature>
<feature type="binding site" evidence="1">
    <location>
        <position position="247"/>
    </location>
    <ligand>
        <name>L-methionine</name>
        <dbReference type="ChEBI" id="CHEBI:57844"/>
        <note>ligand shared between two neighboring subunits</note>
    </ligand>
</feature>
<feature type="binding site" description="in other chain" evidence="1">
    <location>
        <begin position="253"/>
        <end position="254"/>
    </location>
    <ligand>
        <name>ATP</name>
        <dbReference type="ChEBI" id="CHEBI:30616"/>
        <note>ligand shared between two neighboring subunits</note>
    </ligand>
</feature>
<feature type="binding site" evidence="1">
    <location>
        <position position="270"/>
    </location>
    <ligand>
        <name>ATP</name>
        <dbReference type="ChEBI" id="CHEBI:30616"/>
        <note>ligand shared between two neighboring subunits</note>
    </ligand>
</feature>
<feature type="binding site" evidence="1">
    <location>
        <position position="274"/>
    </location>
    <ligand>
        <name>ATP</name>
        <dbReference type="ChEBI" id="CHEBI:30616"/>
        <note>ligand shared between two neighboring subunits</note>
    </ligand>
</feature>
<feature type="binding site" description="in other chain" evidence="1">
    <location>
        <position position="278"/>
    </location>
    <ligand>
        <name>L-methionine</name>
        <dbReference type="ChEBI" id="CHEBI:57844"/>
        <note>ligand shared between two neighboring subunits</note>
    </ligand>
</feature>
<dbReference type="EC" id="2.5.1.6" evidence="1"/>
<dbReference type="EMBL" id="CP000939">
    <property type="protein sequence ID" value="ACA43466.1"/>
    <property type="molecule type" value="Genomic_DNA"/>
</dbReference>
<dbReference type="RefSeq" id="WP_003398958.1">
    <property type="nucleotide sequence ID" value="NC_010516.1"/>
</dbReference>
<dbReference type="SMR" id="B1IE45"/>
<dbReference type="KEGG" id="cbb:CLD_0612"/>
<dbReference type="HOGENOM" id="CLU_041802_1_1_9"/>
<dbReference type="UniPathway" id="UPA00315">
    <property type="reaction ID" value="UER00080"/>
</dbReference>
<dbReference type="Proteomes" id="UP000008541">
    <property type="component" value="Chromosome"/>
</dbReference>
<dbReference type="GO" id="GO:0005737">
    <property type="term" value="C:cytoplasm"/>
    <property type="evidence" value="ECO:0007669"/>
    <property type="project" value="UniProtKB-SubCell"/>
</dbReference>
<dbReference type="GO" id="GO:0005524">
    <property type="term" value="F:ATP binding"/>
    <property type="evidence" value="ECO:0007669"/>
    <property type="project" value="UniProtKB-UniRule"/>
</dbReference>
<dbReference type="GO" id="GO:0000287">
    <property type="term" value="F:magnesium ion binding"/>
    <property type="evidence" value="ECO:0007669"/>
    <property type="project" value="UniProtKB-UniRule"/>
</dbReference>
<dbReference type="GO" id="GO:0004478">
    <property type="term" value="F:methionine adenosyltransferase activity"/>
    <property type="evidence" value="ECO:0007669"/>
    <property type="project" value="UniProtKB-UniRule"/>
</dbReference>
<dbReference type="GO" id="GO:0006730">
    <property type="term" value="P:one-carbon metabolic process"/>
    <property type="evidence" value="ECO:0007669"/>
    <property type="project" value="UniProtKB-KW"/>
</dbReference>
<dbReference type="GO" id="GO:0006556">
    <property type="term" value="P:S-adenosylmethionine biosynthetic process"/>
    <property type="evidence" value="ECO:0007669"/>
    <property type="project" value="UniProtKB-UniRule"/>
</dbReference>
<dbReference type="CDD" id="cd18079">
    <property type="entry name" value="S-AdoMet_synt"/>
    <property type="match status" value="1"/>
</dbReference>
<dbReference type="FunFam" id="3.30.300.10:FF:000003">
    <property type="entry name" value="S-adenosylmethionine synthase"/>
    <property type="match status" value="1"/>
</dbReference>
<dbReference type="FunFam" id="3.30.300.10:FF:000004">
    <property type="entry name" value="S-adenosylmethionine synthase"/>
    <property type="match status" value="1"/>
</dbReference>
<dbReference type="Gene3D" id="3.30.300.10">
    <property type="match status" value="3"/>
</dbReference>
<dbReference type="HAMAP" id="MF_00086">
    <property type="entry name" value="S_AdoMet_synth1"/>
    <property type="match status" value="1"/>
</dbReference>
<dbReference type="InterPro" id="IPR022631">
    <property type="entry name" value="ADOMET_SYNTHASE_CS"/>
</dbReference>
<dbReference type="InterPro" id="IPR022630">
    <property type="entry name" value="S-AdoMet_synt_C"/>
</dbReference>
<dbReference type="InterPro" id="IPR022629">
    <property type="entry name" value="S-AdoMet_synt_central"/>
</dbReference>
<dbReference type="InterPro" id="IPR022628">
    <property type="entry name" value="S-AdoMet_synt_N"/>
</dbReference>
<dbReference type="InterPro" id="IPR002133">
    <property type="entry name" value="S-AdoMet_synthetase"/>
</dbReference>
<dbReference type="InterPro" id="IPR022636">
    <property type="entry name" value="S-AdoMet_synthetase_sfam"/>
</dbReference>
<dbReference type="NCBIfam" id="TIGR01034">
    <property type="entry name" value="metK"/>
    <property type="match status" value="1"/>
</dbReference>
<dbReference type="PANTHER" id="PTHR11964">
    <property type="entry name" value="S-ADENOSYLMETHIONINE SYNTHETASE"/>
    <property type="match status" value="1"/>
</dbReference>
<dbReference type="Pfam" id="PF02773">
    <property type="entry name" value="S-AdoMet_synt_C"/>
    <property type="match status" value="1"/>
</dbReference>
<dbReference type="Pfam" id="PF02772">
    <property type="entry name" value="S-AdoMet_synt_M"/>
    <property type="match status" value="1"/>
</dbReference>
<dbReference type="Pfam" id="PF00438">
    <property type="entry name" value="S-AdoMet_synt_N"/>
    <property type="match status" value="1"/>
</dbReference>
<dbReference type="PIRSF" id="PIRSF000497">
    <property type="entry name" value="MAT"/>
    <property type="match status" value="1"/>
</dbReference>
<dbReference type="SUPFAM" id="SSF55973">
    <property type="entry name" value="S-adenosylmethionine synthetase"/>
    <property type="match status" value="3"/>
</dbReference>
<dbReference type="PROSITE" id="PS00376">
    <property type="entry name" value="ADOMET_SYNTHASE_1"/>
    <property type="match status" value="1"/>
</dbReference>
<dbReference type="PROSITE" id="PS00377">
    <property type="entry name" value="ADOMET_SYNTHASE_2"/>
    <property type="match status" value="1"/>
</dbReference>
<accession>B1IE45</accession>
<evidence type="ECO:0000255" key="1">
    <source>
        <dbReference type="HAMAP-Rule" id="MF_00086"/>
    </source>
</evidence>
<keyword id="KW-0067">ATP-binding</keyword>
<keyword id="KW-0963">Cytoplasm</keyword>
<keyword id="KW-0460">Magnesium</keyword>
<keyword id="KW-0479">Metal-binding</keyword>
<keyword id="KW-0547">Nucleotide-binding</keyword>
<keyword id="KW-0554">One-carbon metabolism</keyword>
<keyword id="KW-0630">Potassium</keyword>
<keyword id="KW-0808">Transferase</keyword>
<proteinExistence type="inferred from homology"/>
<protein>
    <recommendedName>
        <fullName evidence="1">S-adenosylmethionine synthase</fullName>
        <shortName evidence="1">AdoMet synthase</shortName>
        <ecNumber evidence="1">2.5.1.6</ecNumber>
    </recommendedName>
    <alternativeName>
        <fullName evidence="1">MAT</fullName>
    </alternativeName>
    <alternativeName>
        <fullName evidence="1">Methionine adenosyltransferase</fullName>
    </alternativeName>
</protein>
<gene>
    <name evidence="1" type="primary">metK</name>
    <name type="ordered locus">CLD_0612</name>
</gene>
<comment type="function">
    <text evidence="1">Catalyzes the formation of S-adenosylmethionine (AdoMet) from methionine and ATP. The overall synthetic reaction is composed of two sequential steps, AdoMet formation and the subsequent tripolyphosphate hydrolysis which occurs prior to release of AdoMet from the enzyme.</text>
</comment>
<comment type="catalytic activity">
    <reaction evidence="1">
        <text>L-methionine + ATP + H2O = S-adenosyl-L-methionine + phosphate + diphosphate</text>
        <dbReference type="Rhea" id="RHEA:21080"/>
        <dbReference type="ChEBI" id="CHEBI:15377"/>
        <dbReference type="ChEBI" id="CHEBI:30616"/>
        <dbReference type="ChEBI" id="CHEBI:33019"/>
        <dbReference type="ChEBI" id="CHEBI:43474"/>
        <dbReference type="ChEBI" id="CHEBI:57844"/>
        <dbReference type="ChEBI" id="CHEBI:59789"/>
        <dbReference type="EC" id="2.5.1.6"/>
    </reaction>
</comment>
<comment type="cofactor">
    <cofactor evidence="1">
        <name>Mg(2+)</name>
        <dbReference type="ChEBI" id="CHEBI:18420"/>
    </cofactor>
    <text evidence="1">Binds 2 divalent ions per subunit.</text>
</comment>
<comment type="cofactor">
    <cofactor evidence="1">
        <name>K(+)</name>
        <dbReference type="ChEBI" id="CHEBI:29103"/>
    </cofactor>
    <text evidence="1">Binds 1 potassium ion per subunit.</text>
</comment>
<comment type="pathway">
    <text evidence="1">Amino-acid biosynthesis; S-adenosyl-L-methionine biosynthesis; S-adenosyl-L-methionine from L-methionine: step 1/1.</text>
</comment>
<comment type="subunit">
    <text evidence="1">Homotetramer; dimer of dimers.</text>
</comment>
<comment type="subcellular location">
    <subcellularLocation>
        <location evidence="1">Cytoplasm</location>
    </subcellularLocation>
</comment>
<comment type="similarity">
    <text evidence="1">Belongs to the AdoMet synthase family.</text>
</comment>
<name>METK_CLOBK</name>
<reference key="1">
    <citation type="journal article" date="2007" name="PLoS ONE">
        <title>Analysis of the neurotoxin complex genes in Clostridium botulinum A1-A4 and B1 strains: BoNT/A3, /Ba4 and /B1 clusters are located within plasmids.</title>
        <authorList>
            <person name="Smith T.J."/>
            <person name="Hill K.K."/>
            <person name="Foley B.T."/>
            <person name="Detter J.C."/>
            <person name="Munk A.C."/>
            <person name="Bruce D.C."/>
            <person name="Doggett N.A."/>
            <person name="Smith L.A."/>
            <person name="Marks J.D."/>
            <person name="Xie G."/>
            <person name="Brettin T.S."/>
        </authorList>
    </citation>
    <scope>NUCLEOTIDE SEQUENCE [LARGE SCALE GENOMIC DNA]</scope>
    <source>
        <strain>Okra / Type B1</strain>
    </source>
</reference>
<organism>
    <name type="scientific">Clostridium botulinum (strain Okra / Type B1)</name>
    <dbReference type="NCBI Taxonomy" id="498213"/>
    <lineage>
        <taxon>Bacteria</taxon>
        <taxon>Bacillati</taxon>
        <taxon>Bacillota</taxon>
        <taxon>Clostridia</taxon>
        <taxon>Eubacteriales</taxon>
        <taxon>Clostridiaceae</taxon>
        <taxon>Clostridium</taxon>
    </lineage>
</organism>
<sequence>MRKLFTSESVTEGHPDKICDQISDAVLDAILDKDPNGRVACETAVTTGMVMVMGEISTKCYVDIPKLVRETIRGIGYDRAKYGFDCETCSVITSIDEQSVDIAIGVDEALESKKGEMDKLDAVGAGDQGMMFGFATNETKEYMPMPIEMAHKLSRRLSEVRKNGTLPYLRPDGKTQVTVEYENGKPVRIDAIVISTQHGPEVYLEQIEKDIKEHVIKVIVPSELLDENTKYFINPTGRFVVGGPQGDSGLTGRKIIVDTYGGYGRHGGGAFSGKDPTKVDRSAAYAARWVAKNLVAAGVADKLEIQLAYAIGVAKPVSISVDTFGTGKMTDEEIVSIVNKVFDLRPGAIIRDLDLRRPIYKQVAAYGHFGRTDIDVPWERLDKVEEIKKHI</sequence>